<evidence type="ECO:0000250" key="1">
    <source>
        <dbReference type="UniProtKB" id="K7IM66"/>
    </source>
</evidence>
<evidence type="ECO:0000255" key="2">
    <source>
        <dbReference type="HAMAP-Rule" id="MF_03003"/>
    </source>
</evidence>
<evidence type="ECO:0000256" key="3">
    <source>
        <dbReference type="SAM" id="MobiDB-lite"/>
    </source>
</evidence>
<evidence type="ECO:0000269" key="4">
    <source>
    </source>
</evidence>
<evidence type="ECO:0000305" key="5"/>
<evidence type="ECO:0000312" key="6">
    <source>
        <dbReference type="FlyBase" id="FBgn0040227"/>
    </source>
</evidence>
<accession>Q9VCK0</accession>
<accession>Q9NHP3</accession>
<proteinExistence type="evidence at protein level"/>
<dbReference type="EMBL" id="AF220363">
    <property type="protein sequence ID" value="AAF37264.1"/>
    <property type="molecule type" value="mRNA"/>
</dbReference>
<dbReference type="EMBL" id="AE014297">
    <property type="protein sequence ID" value="AAF56158.1"/>
    <property type="molecule type" value="Genomic_DNA"/>
</dbReference>
<dbReference type="EMBL" id="BT023923">
    <property type="protein sequence ID" value="ABB36427.1"/>
    <property type="molecule type" value="mRNA"/>
</dbReference>
<dbReference type="RefSeq" id="NP_524463.2">
    <property type="nucleotide sequence ID" value="NM_079739.4"/>
</dbReference>
<dbReference type="SMR" id="Q9VCK0"/>
<dbReference type="BioGRID" id="67727">
    <property type="interactions" value="17"/>
</dbReference>
<dbReference type="FunCoup" id="Q9VCK0">
    <property type="interactions" value="2829"/>
</dbReference>
<dbReference type="IntAct" id="Q9VCK0">
    <property type="interactions" value="9"/>
</dbReference>
<dbReference type="MINT" id="Q9VCK0"/>
<dbReference type="STRING" id="7227.FBpp0088565"/>
<dbReference type="iPTMnet" id="Q9VCK0"/>
<dbReference type="PaxDb" id="7227-FBpp0088565"/>
<dbReference type="DNASU" id="42789"/>
<dbReference type="EnsemblMetazoa" id="FBtr0089622">
    <property type="protein sequence ID" value="FBpp0088565"/>
    <property type="gene ID" value="FBgn0040227"/>
</dbReference>
<dbReference type="GeneID" id="42789"/>
<dbReference type="KEGG" id="dme:Dmel_CG10161"/>
<dbReference type="UCSC" id="CG10161-RB">
    <property type="organism name" value="d. melanogaster"/>
</dbReference>
<dbReference type="AGR" id="FB:FBgn0040227"/>
<dbReference type="CTD" id="42789"/>
<dbReference type="FlyBase" id="FBgn0040227">
    <property type="gene designation" value="eIF3d1"/>
</dbReference>
<dbReference type="VEuPathDB" id="VectorBase:FBgn0040227"/>
<dbReference type="eggNOG" id="KOG2479">
    <property type="taxonomic scope" value="Eukaryota"/>
</dbReference>
<dbReference type="GeneTree" id="ENSGT00390000002667"/>
<dbReference type="HOGENOM" id="CLU_024521_2_0_1"/>
<dbReference type="InParanoid" id="Q9VCK0"/>
<dbReference type="OMA" id="FMDKRDN"/>
<dbReference type="OrthoDB" id="16538at2759"/>
<dbReference type="PhylomeDB" id="Q9VCK0"/>
<dbReference type="Reactome" id="R-DME-156827">
    <property type="pathway name" value="L13a-mediated translational silencing of Ceruloplasmin expression"/>
</dbReference>
<dbReference type="Reactome" id="R-DME-72649">
    <property type="pathway name" value="Translation initiation complex formation"/>
</dbReference>
<dbReference type="Reactome" id="R-DME-72689">
    <property type="pathway name" value="Formation of a pool of free 40S subunits"/>
</dbReference>
<dbReference type="Reactome" id="R-DME-72695">
    <property type="pathway name" value="Formation of the ternary complex, and subsequently, the 43S complex"/>
</dbReference>
<dbReference type="Reactome" id="R-DME-72702">
    <property type="pathway name" value="Ribosomal scanning and start codon recognition"/>
</dbReference>
<dbReference type="BioGRID-ORCS" id="42789">
    <property type="hits" value="0 hits in 1 CRISPR screen"/>
</dbReference>
<dbReference type="ChiTaRS" id="eIF-3p66">
    <property type="organism name" value="fly"/>
</dbReference>
<dbReference type="GenomeRNAi" id="42789"/>
<dbReference type="PRO" id="PR:Q9VCK0"/>
<dbReference type="Proteomes" id="UP000000803">
    <property type="component" value="Chromosome 3R"/>
</dbReference>
<dbReference type="Bgee" id="FBgn0040227">
    <property type="expression patterns" value="Expressed in wing disc and 216 other cell types or tissues"/>
</dbReference>
<dbReference type="ExpressionAtlas" id="Q9VCK0">
    <property type="expression patterns" value="baseline and differential"/>
</dbReference>
<dbReference type="GO" id="GO:0005829">
    <property type="term" value="C:cytosol"/>
    <property type="evidence" value="ECO:0000250"/>
    <property type="project" value="FlyBase"/>
</dbReference>
<dbReference type="GO" id="GO:0016282">
    <property type="term" value="C:eukaryotic 43S preinitiation complex"/>
    <property type="evidence" value="ECO:0007669"/>
    <property type="project" value="UniProtKB-UniRule"/>
</dbReference>
<dbReference type="GO" id="GO:0033290">
    <property type="term" value="C:eukaryotic 48S preinitiation complex"/>
    <property type="evidence" value="ECO:0007669"/>
    <property type="project" value="UniProtKB-UniRule"/>
</dbReference>
<dbReference type="GO" id="GO:0005852">
    <property type="term" value="C:eukaryotic translation initiation factor 3 complex"/>
    <property type="evidence" value="ECO:0000314"/>
    <property type="project" value="UniProtKB"/>
</dbReference>
<dbReference type="GO" id="GO:0005634">
    <property type="term" value="C:nucleus"/>
    <property type="evidence" value="ECO:0000314"/>
    <property type="project" value="UniProtKB"/>
</dbReference>
<dbReference type="GO" id="GO:0098808">
    <property type="term" value="F:mRNA cap binding"/>
    <property type="evidence" value="ECO:0007669"/>
    <property type="project" value="UniProtKB-UniRule"/>
</dbReference>
<dbReference type="GO" id="GO:0003743">
    <property type="term" value="F:translation initiation factor activity"/>
    <property type="evidence" value="ECO:0000314"/>
    <property type="project" value="UniProtKB"/>
</dbReference>
<dbReference type="GO" id="GO:0002191">
    <property type="term" value="P:cap-dependent translational initiation"/>
    <property type="evidence" value="ECO:0007669"/>
    <property type="project" value="UniProtKB-UniRule"/>
</dbReference>
<dbReference type="GO" id="GO:0001732">
    <property type="term" value="P:formation of cytoplasmic translation initiation complex"/>
    <property type="evidence" value="ECO:0007669"/>
    <property type="project" value="UniProtKB-UniRule"/>
</dbReference>
<dbReference type="GO" id="GO:0006446">
    <property type="term" value="P:regulation of translational initiation"/>
    <property type="evidence" value="ECO:0000314"/>
    <property type="project" value="UniProtKB"/>
</dbReference>
<dbReference type="GO" id="GO:0006413">
    <property type="term" value="P:translational initiation"/>
    <property type="evidence" value="ECO:0000250"/>
    <property type="project" value="FlyBase"/>
</dbReference>
<dbReference type="HAMAP" id="MF_03003">
    <property type="entry name" value="eIF3d"/>
    <property type="match status" value="1"/>
</dbReference>
<dbReference type="InterPro" id="IPR007783">
    <property type="entry name" value="eIF3d"/>
</dbReference>
<dbReference type="PANTHER" id="PTHR12399">
    <property type="entry name" value="EUKARYOTIC TRANSLATION INITIATION FACTOR 3 SUBUNIT 7"/>
    <property type="match status" value="1"/>
</dbReference>
<dbReference type="PANTHER" id="PTHR12399:SF0">
    <property type="entry name" value="EUKARYOTIC TRANSLATION INITIATION FACTOR 3 SUBUNIT D"/>
    <property type="match status" value="1"/>
</dbReference>
<dbReference type="Pfam" id="PF05091">
    <property type="entry name" value="eIF-3_zeta"/>
    <property type="match status" value="1"/>
</dbReference>
<dbReference type="PIRSF" id="PIRSF016281">
    <property type="entry name" value="EIF-3_zeta"/>
    <property type="match status" value="1"/>
</dbReference>
<reference key="1">
    <citation type="submission" date="2000-01" db="EMBL/GenBank/DDBJ databases">
        <title>Structure of a cDNA encoding Drosophila eukaryotic initiation factor 3 subunit p66.</title>
        <authorList>
            <person name="Seong K."/>
            <person name="Aigaki T."/>
        </authorList>
    </citation>
    <scope>NUCLEOTIDE SEQUENCE [MRNA]</scope>
</reference>
<reference key="2">
    <citation type="journal article" date="2000" name="Science">
        <title>The genome sequence of Drosophila melanogaster.</title>
        <authorList>
            <person name="Adams M.D."/>
            <person name="Celniker S.E."/>
            <person name="Holt R.A."/>
            <person name="Evans C.A."/>
            <person name="Gocayne J.D."/>
            <person name="Amanatides P.G."/>
            <person name="Scherer S.E."/>
            <person name="Li P.W."/>
            <person name="Hoskins R.A."/>
            <person name="Galle R.F."/>
            <person name="George R.A."/>
            <person name="Lewis S.E."/>
            <person name="Richards S."/>
            <person name="Ashburner M."/>
            <person name="Henderson S.N."/>
            <person name="Sutton G.G."/>
            <person name="Wortman J.R."/>
            <person name="Yandell M.D."/>
            <person name="Zhang Q."/>
            <person name="Chen L.X."/>
            <person name="Brandon R.C."/>
            <person name="Rogers Y.-H.C."/>
            <person name="Blazej R.G."/>
            <person name="Champe M."/>
            <person name="Pfeiffer B.D."/>
            <person name="Wan K.H."/>
            <person name="Doyle C."/>
            <person name="Baxter E.G."/>
            <person name="Helt G."/>
            <person name="Nelson C.R."/>
            <person name="Miklos G.L.G."/>
            <person name="Abril J.F."/>
            <person name="Agbayani A."/>
            <person name="An H.-J."/>
            <person name="Andrews-Pfannkoch C."/>
            <person name="Baldwin D."/>
            <person name="Ballew R.M."/>
            <person name="Basu A."/>
            <person name="Baxendale J."/>
            <person name="Bayraktaroglu L."/>
            <person name="Beasley E.M."/>
            <person name="Beeson K.Y."/>
            <person name="Benos P.V."/>
            <person name="Berman B.P."/>
            <person name="Bhandari D."/>
            <person name="Bolshakov S."/>
            <person name="Borkova D."/>
            <person name="Botchan M.R."/>
            <person name="Bouck J."/>
            <person name="Brokstein P."/>
            <person name="Brottier P."/>
            <person name="Burtis K.C."/>
            <person name="Busam D.A."/>
            <person name="Butler H."/>
            <person name="Cadieu E."/>
            <person name="Center A."/>
            <person name="Chandra I."/>
            <person name="Cherry J.M."/>
            <person name="Cawley S."/>
            <person name="Dahlke C."/>
            <person name="Davenport L.B."/>
            <person name="Davies P."/>
            <person name="de Pablos B."/>
            <person name="Delcher A."/>
            <person name="Deng Z."/>
            <person name="Mays A.D."/>
            <person name="Dew I."/>
            <person name="Dietz S.M."/>
            <person name="Dodson K."/>
            <person name="Doup L.E."/>
            <person name="Downes M."/>
            <person name="Dugan-Rocha S."/>
            <person name="Dunkov B.C."/>
            <person name="Dunn P."/>
            <person name="Durbin K.J."/>
            <person name="Evangelista C.C."/>
            <person name="Ferraz C."/>
            <person name="Ferriera S."/>
            <person name="Fleischmann W."/>
            <person name="Fosler C."/>
            <person name="Gabrielian A.E."/>
            <person name="Garg N.S."/>
            <person name="Gelbart W.M."/>
            <person name="Glasser K."/>
            <person name="Glodek A."/>
            <person name="Gong F."/>
            <person name="Gorrell J.H."/>
            <person name="Gu Z."/>
            <person name="Guan P."/>
            <person name="Harris M."/>
            <person name="Harris N.L."/>
            <person name="Harvey D.A."/>
            <person name="Heiman T.J."/>
            <person name="Hernandez J.R."/>
            <person name="Houck J."/>
            <person name="Hostin D."/>
            <person name="Houston K.A."/>
            <person name="Howland T.J."/>
            <person name="Wei M.-H."/>
            <person name="Ibegwam C."/>
            <person name="Jalali M."/>
            <person name="Kalush F."/>
            <person name="Karpen G.H."/>
            <person name="Ke Z."/>
            <person name="Kennison J.A."/>
            <person name="Ketchum K.A."/>
            <person name="Kimmel B.E."/>
            <person name="Kodira C.D."/>
            <person name="Kraft C.L."/>
            <person name="Kravitz S."/>
            <person name="Kulp D."/>
            <person name="Lai Z."/>
            <person name="Lasko P."/>
            <person name="Lei Y."/>
            <person name="Levitsky A.A."/>
            <person name="Li J.H."/>
            <person name="Li Z."/>
            <person name="Liang Y."/>
            <person name="Lin X."/>
            <person name="Liu X."/>
            <person name="Mattei B."/>
            <person name="McIntosh T.C."/>
            <person name="McLeod M.P."/>
            <person name="McPherson D."/>
            <person name="Merkulov G."/>
            <person name="Milshina N.V."/>
            <person name="Mobarry C."/>
            <person name="Morris J."/>
            <person name="Moshrefi A."/>
            <person name="Mount S.M."/>
            <person name="Moy M."/>
            <person name="Murphy B."/>
            <person name="Murphy L."/>
            <person name="Muzny D.M."/>
            <person name="Nelson D.L."/>
            <person name="Nelson D.R."/>
            <person name="Nelson K.A."/>
            <person name="Nixon K."/>
            <person name="Nusskern D.R."/>
            <person name="Pacleb J.M."/>
            <person name="Palazzolo M."/>
            <person name="Pittman G.S."/>
            <person name="Pan S."/>
            <person name="Pollard J."/>
            <person name="Puri V."/>
            <person name="Reese M.G."/>
            <person name="Reinert K."/>
            <person name="Remington K."/>
            <person name="Saunders R.D.C."/>
            <person name="Scheeler F."/>
            <person name="Shen H."/>
            <person name="Shue B.C."/>
            <person name="Siden-Kiamos I."/>
            <person name="Simpson M."/>
            <person name="Skupski M.P."/>
            <person name="Smith T.J."/>
            <person name="Spier E."/>
            <person name="Spradling A.C."/>
            <person name="Stapleton M."/>
            <person name="Strong R."/>
            <person name="Sun E."/>
            <person name="Svirskas R."/>
            <person name="Tector C."/>
            <person name="Turner R."/>
            <person name="Venter E."/>
            <person name="Wang A.H."/>
            <person name="Wang X."/>
            <person name="Wang Z.-Y."/>
            <person name="Wassarman D.A."/>
            <person name="Weinstock G.M."/>
            <person name="Weissenbach J."/>
            <person name="Williams S.M."/>
            <person name="Woodage T."/>
            <person name="Worley K.C."/>
            <person name="Wu D."/>
            <person name="Yang S."/>
            <person name="Yao Q.A."/>
            <person name="Ye J."/>
            <person name="Yeh R.-F."/>
            <person name="Zaveri J.S."/>
            <person name="Zhan M."/>
            <person name="Zhang G."/>
            <person name="Zhao Q."/>
            <person name="Zheng L."/>
            <person name="Zheng X.H."/>
            <person name="Zhong F.N."/>
            <person name="Zhong W."/>
            <person name="Zhou X."/>
            <person name="Zhu S.C."/>
            <person name="Zhu X."/>
            <person name="Smith H.O."/>
            <person name="Gibbs R.A."/>
            <person name="Myers E.W."/>
            <person name="Rubin G.M."/>
            <person name="Venter J.C."/>
        </authorList>
    </citation>
    <scope>NUCLEOTIDE SEQUENCE [LARGE SCALE GENOMIC DNA]</scope>
    <source>
        <strain>Berkeley</strain>
    </source>
</reference>
<reference key="3">
    <citation type="journal article" date="2002" name="Genome Biol.">
        <title>Annotation of the Drosophila melanogaster euchromatic genome: a systematic review.</title>
        <authorList>
            <person name="Misra S."/>
            <person name="Crosby M.A."/>
            <person name="Mungall C.J."/>
            <person name="Matthews B.B."/>
            <person name="Campbell K.S."/>
            <person name="Hradecky P."/>
            <person name="Huang Y."/>
            <person name="Kaminker J.S."/>
            <person name="Millburn G.H."/>
            <person name="Prochnik S.E."/>
            <person name="Smith C.D."/>
            <person name="Tupy J.L."/>
            <person name="Whitfield E.J."/>
            <person name="Bayraktaroglu L."/>
            <person name="Berman B.P."/>
            <person name="Bettencourt B.R."/>
            <person name="Celniker S.E."/>
            <person name="de Grey A.D.N.J."/>
            <person name="Drysdale R.A."/>
            <person name="Harris N.L."/>
            <person name="Richter J."/>
            <person name="Russo S."/>
            <person name="Schroeder A.J."/>
            <person name="Shu S.Q."/>
            <person name="Stapleton M."/>
            <person name="Yamada C."/>
            <person name="Ashburner M."/>
            <person name="Gelbart W.M."/>
            <person name="Rubin G.M."/>
            <person name="Lewis S.E."/>
        </authorList>
    </citation>
    <scope>GENOME REANNOTATION</scope>
    <source>
        <strain>Berkeley</strain>
    </source>
</reference>
<reference key="4">
    <citation type="submission" date="2005-10" db="EMBL/GenBank/DDBJ databases">
        <authorList>
            <person name="Stapleton M."/>
            <person name="Carlson J.W."/>
            <person name="Chavez C."/>
            <person name="Frise E."/>
            <person name="George R.A."/>
            <person name="Pacleb J.M."/>
            <person name="Park S."/>
            <person name="Wan K.H."/>
            <person name="Yu C."/>
            <person name="Celniker S.E."/>
        </authorList>
    </citation>
    <scope>NUCLEOTIDE SEQUENCE [LARGE SCALE MRNA]</scope>
    <source>
        <strain>Berkeley</strain>
        <tissue>Head</tissue>
    </source>
</reference>
<reference key="5">
    <citation type="journal article" date="2008" name="J. Proteome Res.">
        <title>Phosphoproteome analysis of Drosophila melanogaster embryos.</title>
        <authorList>
            <person name="Zhai B."/>
            <person name="Villen J."/>
            <person name="Beausoleil S.A."/>
            <person name="Mintseris J."/>
            <person name="Gygi S.P."/>
        </authorList>
    </citation>
    <scope>PHOSPHORYLATION [LARGE SCALE ANALYSIS] AT THR-128</scope>
    <scope>IDENTIFICATION BY MASS SPECTROMETRY</scope>
    <source>
        <tissue>Embryo</tissue>
    </source>
</reference>
<gene>
    <name evidence="2" type="primary">eIF3d1</name>
    <name type="synonym">eIF-3p66</name>
    <name evidence="6" type="ORF">CG10161</name>
</gene>
<name>EI3D1_DROME</name>
<feature type="chain" id="PRO_0000364148" description="Eukaryotic translation initiation factor 3 subunit D-1">
    <location>
        <begin position="1"/>
        <end position="560"/>
    </location>
</feature>
<feature type="region of interest" description="Disordered" evidence="3">
    <location>
        <begin position="98"/>
        <end position="166"/>
    </location>
</feature>
<feature type="region of interest" description="RNA gate" evidence="1">
    <location>
        <begin position="291"/>
        <end position="305"/>
    </location>
</feature>
<feature type="compositionally biased region" description="Basic residues" evidence="3">
    <location>
        <begin position="100"/>
        <end position="121"/>
    </location>
</feature>
<feature type="compositionally biased region" description="Basic residues" evidence="3">
    <location>
        <begin position="147"/>
        <end position="156"/>
    </location>
</feature>
<feature type="modified residue" description="Phosphothreonine" evidence="4">
    <location>
        <position position="128"/>
    </location>
</feature>
<feature type="sequence conflict" description="In Ref. 1; AAF37264." evidence="5" ref="1">
    <original>N</original>
    <variation>K</variation>
    <location>
        <position position="435"/>
    </location>
</feature>
<comment type="function">
    <text evidence="2">mRNA cap-binding component of the eukaryotic translation initiation factor 3 (eIF-3) complex, which is involved in protein synthesis of a specialized repertoire of mRNAs and, together with other initiation factors, stimulates binding of mRNA and methionyl-tRNAi to the 40S ribosome. The eIF-3 complex specifically targets and initiates translation of a subset of mRNAs involved in cell proliferation. In the eIF-3 complex, eif3d specifically recognizes and binds the 7-methylguanosine cap of a subset of mRNAs.</text>
</comment>
<comment type="subunit">
    <text evidence="2">Component of the eukaryotic translation initiation factor 3 (eIF-3) complex. The eIF-3 complex interacts with pix.</text>
</comment>
<comment type="subcellular location">
    <subcellularLocation>
        <location evidence="2">Cytoplasm</location>
    </subcellularLocation>
</comment>
<comment type="domain">
    <text evidence="2">The RNA gate region regulates mRNA cap recognition to prevent promiscuous mRNA-binding before assembly of eif3d into the full eukaryotic translation initiation factor 3 (eIF-3) complex.</text>
</comment>
<comment type="similarity">
    <text evidence="2">Belongs to the eIF-3 subunit D family.</text>
</comment>
<protein>
    <recommendedName>
        <fullName evidence="2">Eukaryotic translation initiation factor 3 subunit D-1</fullName>
        <shortName evidence="2">eIF3d-1</shortName>
    </recommendedName>
    <alternativeName>
        <fullName evidence="2">Eukaryotic translation initiation factor 3 subunit 7-1</fullName>
    </alternativeName>
    <alternativeName>
        <fullName>Eukaryotic translation initiation factor 3 subunit p66</fullName>
    </alternativeName>
</protein>
<organism>
    <name type="scientific">Drosophila melanogaster</name>
    <name type="common">Fruit fly</name>
    <dbReference type="NCBI Taxonomy" id="7227"/>
    <lineage>
        <taxon>Eukaryota</taxon>
        <taxon>Metazoa</taxon>
        <taxon>Ecdysozoa</taxon>
        <taxon>Arthropoda</taxon>
        <taxon>Hexapoda</taxon>
        <taxon>Insecta</taxon>
        <taxon>Pterygota</taxon>
        <taxon>Neoptera</taxon>
        <taxon>Endopterygota</taxon>
        <taxon>Diptera</taxon>
        <taxon>Brachycera</taxon>
        <taxon>Muscomorpha</taxon>
        <taxon>Ephydroidea</taxon>
        <taxon>Drosophilidae</taxon>
        <taxon>Drosophila</taxon>
        <taxon>Sophophora</taxon>
    </lineage>
</organism>
<sequence length="560" mass="63798">MSETINTAAQFPSFEKPTVQFNEKGWGPCELPDTFKDVPYQPFSKNDRLGKICDWTNTSNNDKKYQNKYASSFGTGIQYSYYHEEDETTFHLVDTARVQKPPHQRGRFRNMRNSRSGRGRNARGGLNTHGMTTLSGKNVKARDPRHGRGMGKKFGHRGPPPKMRESSVAVRADWASIEEMDFPRLIKLSLPNIKEGVDIVTCGTLEYYDKTYDRINVKNEKPLQKIDRIVHTVTTTDDPVIRRLSKTVGNVFATDAILATIMCSTRSNYSWDIVIEKVGDKVFMDKRDHTEFDLLTVNESSVEPPTDDDSSCNSPRNLAIEATFINHNFSQQVLKTGDQEPKYKFEESNPFISEDEDIQVASVGYRYKKWELGSDIVLVARCEHDGVLQTPSGEPQFMTIKALNEWDSKLANGVEWRQKLDTQRGAVLANELRNNACKLAKWTVQAVLAGSDQLKLGYVSRINPRDHSRHVILGTQQFKPHEFATQINLSMDNAWGILRCIIDLVMKQKDGKYLIMKDPNKPIIRLYDIPDNTFDSDDSDDGEGDDEGFQQVYNYAHNKI</sequence>
<keyword id="KW-0963">Cytoplasm</keyword>
<keyword id="KW-0396">Initiation factor</keyword>
<keyword id="KW-0597">Phosphoprotein</keyword>
<keyword id="KW-0648">Protein biosynthesis</keyword>
<keyword id="KW-1185">Reference proteome</keyword>
<keyword id="KW-0694">RNA-binding</keyword>